<geneLocation type="plasmid">
    <name>pSymA</name>
    <name>megaplasmid 1</name>
</geneLocation>
<gene>
    <name type="ordered locus">RA0705</name>
    <name type="ORF">SMa1297</name>
</gene>
<keyword id="KW-1003">Cell membrane</keyword>
<keyword id="KW-0472">Membrane</keyword>
<keyword id="KW-0614">Plasmid</keyword>
<keyword id="KW-1185">Reference proteome</keyword>
<keyword id="KW-0812">Transmembrane</keyword>
<keyword id="KW-1133">Transmembrane helix</keyword>
<sequence length="225" mass="24017">MTVQRRRRIIKRRRSSVGLALVAAISFLAGMTDAIGLMSIGDFVSFMSGNTTRASVALVQGDAAQGLLLIGGLVSFVLGNAAGVMISIRFRPQAALLFVSALLACAALQEGQPELRFVSLIFAMGAVNASVEQIEGLPVGLTYVTGALSRFGRGLGRWAMGVRNTQWIIQIVPWLGMFAGAIMGAVLVREAGDLALWVPSLAALLLTAAAFQIPRRWQSRFIQSR</sequence>
<comment type="subcellular location">
    <subcellularLocation>
        <location evidence="2">Cell membrane</location>
        <topology evidence="2">Multi-pass membrane protein</topology>
    </subcellularLocation>
</comment>
<comment type="similarity">
    <text evidence="2">Belongs to the UPF0700 family.</text>
</comment>
<reference key="1">
    <citation type="journal article" date="1998" name="Biochim. Biophys. Acta">
        <title>Identification of the Rhizobium meliloti alcohol dehydrogenase gene (adhA) and heterologous expression in Alcaligenes eutrophus.</title>
        <authorList>
            <person name="Willis L.B."/>
            <person name="Walker G.C."/>
        </authorList>
    </citation>
    <scope>NUCLEOTIDE SEQUENCE [GENOMIC DNA]</scope>
    <source>
        <strain>1021</strain>
    </source>
</reference>
<reference key="2">
    <citation type="journal article" date="2001" name="Proc. Natl. Acad. Sci. U.S.A.">
        <title>Nucleotide sequence and predicted functions of the entire Sinorhizobium meliloti pSymA megaplasmid.</title>
        <authorList>
            <person name="Barnett M.J."/>
            <person name="Fisher R.F."/>
            <person name="Jones T."/>
            <person name="Komp C."/>
            <person name="Abola A.P."/>
            <person name="Barloy-Hubler F."/>
            <person name="Bowser L."/>
            <person name="Capela D."/>
            <person name="Galibert F."/>
            <person name="Gouzy J."/>
            <person name="Gurjal M."/>
            <person name="Hong A."/>
            <person name="Huizar L."/>
            <person name="Hyman R.W."/>
            <person name="Kahn D."/>
            <person name="Kahn M.L."/>
            <person name="Kalman S."/>
            <person name="Keating D.H."/>
            <person name="Palm C."/>
            <person name="Peck M.C."/>
            <person name="Surzycki R."/>
            <person name="Wells D.H."/>
            <person name="Yeh K.-C."/>
            <person name="Davis R.W."/>
            <person name="Federspiel N.A."/>
            <person name="Long S.R."/>
        </authorList>
    </citation>
    <scope>NUCLEOTIDE SEQUENCE [LARGE SCALE GENOMIC DNA]</scope>
    <source>
        <strain>1021</strain>
    </source>
</reference>
<reference key="3">
    <citation type="journal article" date="2001" name="Science">
        <title>The composite genome of the legume symbiont Sinorhizobium meliloti.</title>
        <authorList>
            <person name="Galibert F."/>
            <person name="Finan T.M."/>
            <person name="Long S.R."/>
            <person name="Puehler A."/>
            <person name="Abola P."/>
            <person name="Ampe F."/>
            <person name="Barloy-Hubler F."/>
            <person name="Barnett M.J."/>
            <person name="Becker A."/>
            <person name="Boistard P."/>
            <person name="Bothe G."/>
            <person name="Boutry M."/>
            <person name="Bowser L."/>
            <person name="Buhrmester J."/>
            <person name="Cadieu E."/>
            <person name="Capela D."/>
            <person name="Chain P."/>
            <person name="Cowie A."/>
            <person name="Davis R.W."/>
            <person name="Dreano S."/>
            <person name="Federspiel N.A."/>
            <person name="Fisher R.F."/>
            <person name="Gloux S."/>
            <person name="Godrie T."/>
            <person name="Goffeau A."/>
            <person name="Golding B."/>
            <person name="Gouzy J."/>
            <person name="Gurjal M."/>
            <person name="Hernandez-Lucas I."/>
            <person name="Hong A."/>
            <person name="Huizar L."/>
            <person name="Hyman R.W."/>
            <person name="Jones T."/>
            <person name="Kahn D."/>
            <person name="Kahn M.L."/>
            <person name="Kalman S."/>
            <person name="Keating D.H."/>
            <person name="Kiss E."/>
            <person name="Komp C."/>
            <person name="Lelaure V."/>
            <person name="Masuy D."/>
            <person name="Palm C."/>
            <person name="Peck M.C."/>
            <person name="Pohl T.M."/>
            <person name="Portetelle D."/>
            <person name="Purnelle B."/>
            <person name="Ramsperger U."/>
            <person name="Surzycki R."/>
            <person name="Thebault P."/>
            <person name="Vandenbol M."/>
            <person name="Vorhoelter F.J."/>
            <person name="Weidner S."/>
            <person name="Wells D.H."/>
            <person name="Wong K."/>
            <person name="Yeh K.-C."/>
            <person name="Batut J."/>
        </authorList>
    </citation>
    <scope>NUCLEOTIDE SEQUENCE [LARGE SCALE GENOMIC DNA]</scope>
    <source>
        <strain>1021</strain>
    </source>
</reference>
<proteinExistence type="inferred from homology"/>
<organism>
    <name type="scientific">Rhizobium meliloti (strain 1021)</name>
    <name type="common">Ensifer meliloti</name>
    <name type="synonym">Sinorhizobium meliloti</name>
    <dbReference type="NCBI Taxonomy" id="266834"/>
    <lineage>
        <taxon>Bacteria</taxon>
        <taxon>Pseudomonadati</taxon>
        <taxon>Pseudomonadota</taxon>
        <taxon>Alphaproteobacteria</taxon>
        <taxon>Hyphomicrobiales</taxon>
        <taxon>Rhizobiaceae</taxon>
        <taxon>Sinorhizobium/Ensifer group</taxon>
        <taxon>Sinorhizobium</taxon>
    </lineage>
</organism>
<accession>O31185</accession>
<feature type="chain" id="PRO_0000160645" description="UPF0700 transmembrane protein RA0705">
    <location>
        <begin position="1"/>
        <end position="225"/>
    </location>
</feature>
<feature type="transmembrane region" description="Helical" evidence="1">
    <location>
        <begin position="17"/>
        <end position="37"/>
    </location>
</feature>
<feature type="transmembrane region" description="Helical" evidence="1">
    <location>
        <begin position="66"/>
        <end position="86"/>
    </location>
</feature>
<feature type="transmembrane region" description="Helical" evidence="1">
    <location>
        <begin position="95"/>
        <end position="115"/>
    </location>
</feature>
<feature type="transmembrane region" description="Helical" evidence="1">
    <location>
        <begin position="117"/>
        <end position="137"/>
    </location>
</feature>
<feature type="transmembrane region" description="Helical" evidence="1">
    <location>
        <begin position="168"/>
        <end position="188"/>
    </location>
</feature>
<feature type="transmembrane region" description="Helical" evidence="1">
    <location>
        <begin position="194"/>
        <end position="214"/>
    </location>
</feature>
<dbReference type="EMBL" id="AF031940">
    <property type="protein sequence ID" value="AAB87462.1"/>
    <property type="molecule type" value="Genomic_DNA"/>
</dbReference>
<dbReference type="EMBL" id="AE006469">
    <property type="protein sequence ID" value="AAK65363.2"/>
    <property type="molecule type" value="Genomic_DNA"/>
</dbReference>
<dbReference type="PIR" id="A95350">
    <property type="entry name" value="A95350"/>
</dbReference>
<dbReference type="RefSeq" id="NP_435951.2">
    <property type="nucleotide sequence ID" value="NC_003037.1"/>
</dbReference>
<dbReference type="RefSeq" id="WP_010967683.1">
    <property type="nucleotide sequence ID" value="NC_003037.1"/>
</dbReference>
<dbReference type="EnsemblBacteria" id="AAK65363">
    <property type="protein sequence ID" value="AAK65363"/>
    <property type="gene ID" value="SMa1297"/>
</dbReference>
<dbReference type="KEGG" id="sme:SMa1297"/>
<dbReference type="HOGENOM" id="CLU_090911_2_0_5"/>
<dbReference type="OrthoDB" id="885342at2"/>
<dbReference type="PRO" id="PR:O31185"/>
<dbReference type="Proteomes" id="UP000001976">
    <property type="component" value="Plasmid pSymA"/>
</dbReference>
<dbReference type="GO" id="GO:0005886">
    <property type="term" value="C:plasma membrane"/>
    <property type="evidence" value="ECO:0007669"/>
    <property type="project" value="UniProtKB-SubCell"/>
</dbReference>
<dbReference type="InterPro" id="IPR010699">
    <property type="entry name" value="DUF1275"/>
</dbReference>
<dbReference type="PANTHER" id="PTHR37314">
    <property type="entry name" value="SLR0142 PROTEIN"/>
    <property type="match status" value="1"/>
</dbReference>
<dbReference type="PANTHER" id="PTHR37314:SF4">
    <property type="entry name" value="UPF0700 TRANSMEMBRANE PROTEIN YOAK"/>
    <property type="match status" value="1"/>
</dbReference>
<dbReference type="Pfam" id="PF06912">
    <property type="entry name" value="DUF1275"/>
    <property type="match status" value="1"/>
</dbReference>
<name>Y4105_RHIME</name>
<protein>
    <recommendedName>
        <fullName>UPF0700 transmembrane protein RA0705</fullName>
    </recommendedName>
</protein>
<evidence type="ECO:0000255" key="1"/>
<evidence type="ECO:0000305" key="2"/>